<proteinExistence type="inferred from homology"/>
<organism>
    <name type="scientific">Bacillus pumilus (strain SAFR-032)</name>
    <dbReference type="NCBI Taxonomy" id="315750"/>
    <lineage>
        <taxon>Bacteria</taxon>
        <taxon>Bacillati</taxon>
        <taxon>Bacillota</taxon>
        <taxon>Bacilli</taxon>
        <taxon>Bacillales</taxon>
        <taxon>Bacillaceae</taxon>
        <taxon>Bacillus</taxon>
    </lineage>
</organism>
<sequence>MEYQYPMDVDWTTEEKIAVISFFQAVEKAYEKGIPKQELLDTYKRFKEIVPSKAEEKTHCAAFEKESGYSPYRTVKTAREAEESTIIRM</sequence>
<reference key="1">
    <citation type="journal article" date="2007" name="PLoS ONE">
        <title>Paradoxical DNA repair and peroxide resistance gene conservation in Bacillus pumilus SAFR-032.</title>
        <authorList>
            <person name="Gioia J."/>
            <person name="Yerrapragada S."/>
            <person name="Qin X."/>
            <person name="Jiang H."/>
            <person name="Igboeli O.C."/>
            <person name="Muzny D."/>
            <person name="Dugan-Rocha S."/>
            <person name="Ding Y."/>
            <person name="Hawes A."/>
            <person name="Liu W."/>
            <person name="Perez L."/>
            <person name="Kovar C."/>
            <person name="Dinh H."/>
            <person name="Lee S."/>
            <person name="Nazareth L."/>
            <person name="Blyth P."/>
            <person name="Holder M."/>
            <person name="Buhay C."/>
            <person name="Tirumalai M.R."/>
            <person name="Liu Y."/>
            <person name="Dasgupta I."/>
            <person name="Bokhetache L."/>
            <person name="Fujita M."/>
            <person name="Karouia F."/>
            <person name="Eswara Moorthy P."/>
            <person name="Siefert J."/>
            <person name="Uzman A."/>
            <person name="Buzumbo P."/>
            <person name="Verma A."/>
            <person name="Zwiya H."/>
            <person name="McWilliams B.D."/>
            <person name="Olowu A."/>
            <person name="Clinkenbeard K.D."/>
            <person name="Newcombe D."/>
            <person name="Golebiewski L."/>
            <person name="Petrosino J.F."/>
            <person name="Nicholson W.L."/>
            <person name="Fox G.E."/>
            <person name="Venkateswaran K."/>
            <person name="Highlander S.K."/>
            <person name="Weinstock G.M."/>
        </authorList>
    </citation>
    <scope>NUCLEOTIDE SEQUENCE [LARGE SCALE GENOMIC DNA]</scope>
    <source>
        <strain>SAFR-032</strain>
    </source>
</reference>
<accession>A8FCS8</accession>
<evidence type="ECO:0000255" key="1">
    <source>
        <dbReference type="HAMAP-Rule" id="MF_01041"/>
    </source>
</evidence>
<comment type="similarity">
    <text evidence="1">Belongs to the UPF0223 family.</text>
</comment>
<protein>
    <recommendedName>
        <fullName evidence="1">UPF0223 protein BPUM_1362</fullName>
    </recommendedName>
</protein>
<feature type="chain" id="PRO_1000064140" description="UPF0223 protein BPUM_1362">
    <location>
        <begin position="1"/>
        <end position="89"/>
    </location>
</feature>
<gene>
    <name type="ordered locus">BPUM_1362</name>
</gene>
<dbReference type="EMBL" id="CP000813">
    <property type="protein sequence ID" value="ABV62045.1"/>
    <property type="molecule type" value="Genomic_DNA"/>
</dbReference>
<dbReference type="RefSeq" id="WP_012009829.1">
    <property type="nucleotide sequence ID" value="NZ_VEIS01000003.1"/>
</dbReference>
<dbReference type="SMR" id="A8FCS8"/>
<dbReference type="STRING" id="315750.BPUM_1362"/>
<dbReference type="GeneID" id="5620625"/>
<dbReference type="KEGG" id="bpu:BPUM_1362"/>
<dbReference type="eggNOG" id="COG4476">
    <property type="taxonomic scope" value="Bacteria"/>
</dbReference>
<dbReference type="HOGENOM" id="CLU_166693_0_0_9"/>
<dbReference type="OrthoDB" id="1649074at2"/>
<dbReference type="Proteomes" id="UP000001355">
    <property type="component" value="Chromosome"/>
</dbReference>
<dbReference type="Gene3D" id="1.10.220.80">
    <property type="entry name" value="BH2638-like"/>
    <property type="match status" value="1"/>
</dbReference>
<dbReference type="HAMAP" id="MF_01041">
    <property type="entry name" value="UPF0223"/>
    <property type="match status" value="1"/>
</dbReference>
<dbReference type="InterPro" id="IPR023324">
    <property type="entry name" value="BH2638-like_sf"/>
</dbReference>
<dbReference type="InterPro" id="IPR007920">
    <property type="entry name" value="UPF0223"/>
</dbReference>
<dbReference type="NCBIfam" id="NF003353">
    <property type="entry name" value="PRK04387.1"/>
    <property type="match status" value="1"/>
</dbReference>
<dbReference type="Pfam" id="PF05256">
    <property type="entry name" value="UPF0223"/>
    <property type="match status" value="1"/>
</dbReference>
<dbReference type="PIRSF" id="PIRSF037260">
    <property type="entry name" value="UPF0223"/>
    <property type="match status" value="1"/>
</dbReference>
<dbReference type="SUPFAM" id="SSF158504">
    <property type="entry name" value="BH2638-like"/>
    <property type="match status" value="1"/>
</dbReference>
<name>Y1362_BACP2</name>